<keyword id="KW-0067">ATP-binding</keyword>
<keyword id="KW-0903">Direct protein sequencing</keyword>
<keyword id="KW-0375">Hydrogen ion transport</keyword>
<keyword id="KW-0406">Ion transport</keyword>
<keyword id="KW-0547">Nucleotide-binding</keyword>
<keyword id="KW-1185">Reference proteome</keyword>
<keyword id="KW-1278">Translocase</keyword>
<keyword id="KW-0813">Transport</keyword>
<protein>
    <recommendedName>
        <fullName>V-type proton ATPase catalytic subunit A</fullName>
        <shortName>V-ATPase subunit A</shortName>
        <ecNumber>7.1.2.2</ecNumber>
    </recommendedName>
    <alternativeName>
        <fullName>V-ATPase 69 kDa subunit</fullName>
    </alternativeName>
    <alternativeName>
        <fullName>VAA3-1</fullName>
    </alternativeName>
    <alternativeName>
        <fullName>Vacuolar proton pump subunit alpha</fullName>
    </alternativeName>
</protein>
<proteinExistence type="evidence at protein level"/>
<accession>P13548</accession>
<accession>Q41683</accession>
<feature type="initiator methionine" description="Removed" evidence="2">
    <location>
        <position position="1"/>
    </location>
</feature>
<feature type="chain" id="PRO_0000144583" description="V-type proton ATPase catalytic subunit A">
    <location>
        <begin position="2"/>
        <end position="623"/>
    </location>
</feature>
<feature type="binding site" evidence="1">
    <location>
        <begin position="252"/>
        <end position="259"/>
    </location>
    <ligand>
        <name>ATP</name>
        <dbReference type="ChEBI" id="CHEBI:30616"/>
    </ligand>
</feature>
<feature type="sequence conflict" description="In Ref. 2; AA sequence." evidence="3" ref="2">
    <original>E</original>
    <variation>L</variation>
    <location>
        <position position="20"/>
    </location>
</feature>
<name>VATA_VIGRR</name>
<sequence length="623" mass="68681">MPAVYGARLTTFEDSEKESEYGYVRKVSGPVVVADGMAGAAMYELVRVGRDNLIGEIIRLEGDSATIQVYEETAGLMVNDPVLRTHKPLSVELGPGILGNIFDGIQRPLKTIAKRSGDVYIPRGVSVPALDKDTLWEFQPKKIGEGDLLTGGDLYATVFENTLMQHHIALPPDAMGKITYIAPPGQYSITDTVLELEFQGVKKKFTMLQTWPVRTPRPVASKLAADTPLLTGQRVLDALFPSVLGGTCAIPGAFGCGKTVISQALSKYSNSDAVVYVGCGERGNEMAEVLMDFPQLTMTLPDGREESVMKRTTLVANTSNMPVAAREASIYTGITLAEYFRDMGYNVSMMADSTSRWAEALREISGRLAEMPADSGYPAYLAARLASFYERPGKVKCLGGPERTGSVTIVGAVSPPGGDFSDPVTSATLSIVQVFWGLDKKLAQRKHFPSVNWLISYSKYSTALESFYEQFDPDFINIRTKAREVLQREDDLNEIVQLVGKDALAEGDKITLETAKLLREDYLAQNAFTPYDKFCPFYKSVWMMRNIIHFYNLANQAVERGAGSDGQKITYSLIKHRVGDLFYRLVSQKFEDPAEGEAALVGQFQKLHEDLSTGFRNLEDETR</sequence>
<reference key="1">
    <citation type="online journal article" date="1995" name="Plant Gene Register">
        <title>A cDNA clone encoding the A subunit of the vacuolar H+-ATPase from etiolated mung bean seedlings.</title>
        <authorList>
            <person name="Chiu S.-J."/>
            <person name="Hung S.-H."/>
            <person name="Lin L.-Y."/>
            <person name="Pan R.L."/>
        </authorList>
        <locator>PGR95-083</locator>
    </citation>
    <scope>NUCLEOTIDE SEQUENCE [MRNA]</scope>
</reference>
<reference key="2">
    <citation type="journal article" date="1990" name="Eur. J. Biochem.">
        <title>Subunit composition of vacuolar membrane H(+)-ATPase from mung bean.</title>
        <authorList>
            <person name="Matuura-Endo C."/>
            <person name="Maeshima M."/>
            <person name="Shizuo Y."/>
        </authorList>
    </citation>
    <scope>PROTEIN SEQUENCE OF 2-26</scope>
    <source>
        <strain>cv. Wilczek</strain>
    </source>
</reference>
<organism>
    <name type="scientific">Vigna radiata var. radiata</name>
    <name type="common">Mung bean</name>
    <name type="synonym">Phaseolus aureus</name>
    <dbReference type="NCBI Taxonomy" id="3916"/>
    <lineage>
        <taxon>Eukaryota</taxon>
        <taxon>Viridiplantae</taxon>
        <taxon>Streptophyta</taxon>
        <taxon>Embryophyta</taxon>
        <taxon>Tracheophyta</taxon>
        <taxon>Spermatophyta</taxon>
        <taxon>Magnoliopsida</taxon>
        <taxon>eudicotyledons</taxon>
        <taxon>Gunneridae</taxon>
        <taxon>Pentapetalae</taxon>
        <taxon>rosids</taxon>
        <taxon>fabids</taxon>
        <taxon>Fabales</taxon>
        <taxon>Fabaceae</taxon>
        <taxon>Papilionoideae</taxon>
        <taxon>50 kb inversion clade</taxon>
        <taxon>NPAAA clade</taxon>
        <taxon>indigoferoid/millettioid clade</taxon>
        <taxon>Phaseoleae</taxon>
        <taxon>Vigna</taxon>
    </lineage>
</organism>
<comment type="function">
    <text>Catalytic subunit of the peripheral V1 complex of vacuolar ATPase. V-ATPase vacuolar ATPase is responsible for acidifying a variety of intracellular compartments in eukaryotic cells.</text>
</comment>
<comment type="catalytic activity">
    <reaction>
        <text>ATP + H2O + 4 H(+)(in) = ADP + phosphate + 5 H(+)(out)</text>
        <dbReference type="Rhea" id="RHEA:57720"/>
        <dbReference type="ChEBI" id="CHEBI:15377"/>
        <dbReference type="ChEBI" id="CHEBI:15378"/>
        <dbReference type="ChEBI" id="CHEBI:30616"/>
        <dbReference type="ChEBI" id="CHEBI:43474"/>
        <dbReference type="ChEBI" id="CHEBI:456216"/>
        <dbReference type="EC" id="7.1.2.2"/>
    </reaction>
</comment>
<comment type="subunit">
    <text>V-ATPase is a heteromultimeric enzyme composed of a peripheral catalytic V1 complex (main components: subunits A, B, C, D, E, and F) attached to an integral membrane V0 proton pore complex (main component: the proteolipid protein).</text>
</comment>
<comment type="similarity">
    <text evidence="3">Belongs to the ATPase alpha/beta chains family.</text>
</comment>
<dbReference type="EC" id="7.1.2.2"/>
<dbReference type="EMBL" id="U26709">
    <property type="protein sequence ID" value="AAC49174.1"/>
    <property type="molecule type" value="mRNA"/>
</dbReference>
<dbReference type="RefSeq" id="NP_001304241.1">
    <property type="nucleotide sequence ID" value="NM_001317312.1"/>
</dbReference>
<dbReference type="SMR" id="P13548"/>
<dbReference type="STRING" id="3916.P13548"/>
<dbReference type="GeneID" id="106773955"/>
<dbReference type="KEGG" id="vra:106773955"/>
<dbReference type="OrthoDB" id="1676488at2759"/>
<dbReference type="Proteomes" id="UP000087766">
    <property type="component" value="Chromosome 9"/>
</dbReference>
<dbReference type="GO" id="GO:0000325">
    <property type="term" value="C:plant-type vacuole"/>
    <property type="evidence" value="ECO:0007669"/>
    <property type="project" value="TreeGrafter"/>
</dbReference>
<dbReference type="GO" id="GO:0033180">
    <property type="term" value="C:proton-transporting V-type ATPase, V1 domain"/>
    <property type="evidence" value="ECO:0007669"/>
    <property type="project" value="InterPro"/>
</dbReference>
<dbReference type="GO" id="GO:0005524">
    <property type="term" value="F:ATP binding"/>
    <property type="evidence" value="ECO:0007669"/>
    <property type="project" value="UniProtKB-KW"/>
</dbReference>
<dbReference type="GO" id="GO:0016887">
    <property type="term" value="F:ATP hydrolysis activity"/>
    <property type="evidence" value="ECO:0007669"/>
    <property type="project" value="InterPro"/>
</dbReference>
<dbReference type="GO" id="GO:0046961">
    <property type="term" value="F:proton-transporting ATPase activity, rotational mechanism"/>
    <property type="evidence" value="ECO:0007669"/>
    <property type="project" value="InterPro"/>
</dbReference>
<dbReference type="GO" id="GO:0046034">
    <property type="term" value="P:ATP metabolic process"/>
    <property type="evidence" value="ECO:0007669"/>
    <property type="project" value="InterPro"/>
</dbReference>
<dbReference type="CDD" id="cd18111">
    <property type="entry name" value="ATP-synt_V_A-type_alpha_C"/>
    <property type="match status" value="1"/>
</dbReference>
<dbReference type="CDD" id="cd18119">
    <property type="entry name" value="ATP-synt_V_A-type_alpha_N"/>
    <property type="match status" value="1"/>
</dbReference>
<dbReference type="CDD" id="cd01134">
    <property type="entry name" value="V_A-ATPase_A"/>
    <property type="match status" value="1"/>
</dbReference>
<dbReference type="FunFam" id="1.10.1140.10:FF:000002">
    <property type="entry name" value="V-type proton ATPase catalytic subunit A"/>
    <property type="match status" value="1"/>
</dbReference>
<dbReference type="FunFam" id="2.40.30.20:FF:000002">
    <property type="entry name" value="V-type proton ATPase catalytic subunit A"/>
    <property type="match status" value="1"/>
</dbReference>
<dbReference type="FunFam" id="2.40.50.100:FF:000008">
    <property type="entry name" value="V-type proton ATPase catalytic subunit A"/>
    <property type="match status" value="1"/>
</dbReference>
<dbReference type="FunFam" id="3.40.50.300:FF:000052">
    <property type="entry name" value="V-type proton ATPase catalytic subunit A"/>
    <property type="match status" value="1"/>
</dbReference>
<dbReference type="Gene3D" id="2.40.30.20">
    <property type="match status" value="1"/>
</dbReference>
<dbReference type="Gene3D" id="2.40.50.100">
    <property type="match status" value="1"/>
</dbReference>
<dbReference type="Gene3D" id="1.10.1140.10">
    <property type="entry name" value="Bovine Mitochondrial F1-atpase, Atp Synthase Beta Chain, Chain D, domain 3"/>
    <property type="match status" value="1"/>
</dbReference>
<dbReference type="Gene3D" id="3.40.50.300">
    <property type="entry name" value="P-loop containing nucleotide triphosphate hydrolases"/>
    <property type="match status" value="1"/>
</dbReference>
<dbReference type="HAMAP" id="MF_00309">
    <property type="entry name" value="ATP_synth_A_arch"/>
    <property type="match status" value="1"/>
</dbReference>
<dbReference type="InterPro" id="IPR055190">
    <property type="entry name" value="ATP-synt_VA_C"/>
</dbReference>
<dbReference type="InterPro" id="IPR031686">
    <property type="entry name" value="ATP-synth_a_Xtn"/>
</dbReference>
<dbReference type="InterPro" id="IPR023366">
    <property type="entry name" value="ATP_synth_asu-like_sf"/>
</dbReference>
<dbReference type="InterPro" id="IPR020003">
    <property type="entry name" value="ATPase_a/bsu_AS"/>
</dbReference>
<dbReference type="InterPro" id="IPR004100">
    <property type="entry name" value="ATPase_F1/V1/A1_a/bsu_N"/>
</dbReference>
<dbReference type="InterPro" id="IPR036121">
    <property type="entry name" value="ATPase_F1/V1/A1_a/bsu_N_sf"/>
</dbReference>
<dbReference type="InterPro" id="IPR000194">
    <property type="entry name" value="ATPase_F1/V1/A1_a/bsu_nucl-bd"/>
</dbReference>
<dbReference type="InterPro" id="IPR024034">
    <property type="entry name" value="ATPase_F1/V1_b/a_C"/>
</dbReference>
<dbReference type="InterPro" id="IPR005725">
    <property type="entry name" value="ATPase_V1-cplx_asu"/>
</dbReference>
<dbReference type="InterPro" id="IPR027417">
    <property type="entry name" value="P-loop_NTPase"/>
</dbReference>
<dbReference type="InterPro" id="IPR022878">
    <property type="entry name" value="V-ATPase_asu"/>
</dbReference>
<dbReference type="NCBIfam" id="NF003220">
    <property type="entry name" value="PRK04192.1"/>
    <property type="match status" value="1"/>
</dbReference>
<dbReference type="NCBIfam" id="TIGR01042">
    <property type="entry name" value="V-ATPase_V1_A"/>
    <property type="match status" value="1"/>
</dbReference>
<dbReference type="PANTHER" id="PTHR43607:SF1">
    <property type="entry name" value="H(+)-TRANSPORTING TWO-SECTOR ATPASE"/>
    <property type="match status" value="1"/>
</dbReference>
<dbReference type="PANTHER" id="PTHR43607">
    <property type="entry name" value="V-TYPE PROTON ATPASE CATALYTIC SUBUNIT A"/>
    <property type="match status" value="1"/>
</dbReference>
<dbReference type="Pfam" id="PF00006">
    <property type="entry name" value="ATP-synt_ab"/>
    <property type="match status" value="1"/>
</dbReference>
<dbReference type="Pfam" id="PF02874">
    <property type="entry name" value="ATP-synt_ab_N"/>
    <property type="match status" value="1"/>
</dbReference>
<dbReference type="Pfam" id="PF16886">
    <property type="entry name" value="ATP-synt_ab_Xtn"/>
    <property type="match status" value="1"/>
</dbReference>
<dbReference type="Pfam" id="PF22919">
    <property type="entry name" value="ATP-synt_VA_C"/>
    <property type="match status" value="1"/>
</dbReference>
<dbReference type="SUPFAM" id="SSF47917">
    <property type="entry name" value="C-terminal domain of alpha and beta subunits of F1 ATP synthase"/>
    <property type="match status" value="1"/>
</dbReference>
<dbReference type="SUPFAM" id="SSF50615">
    <property type="entry name" value="N-terminal domain of alpha and beta subunits of F1 ATP synthase"/>
    <property type="match status" value="1"/>
</dbReference>
<dbReference type="SUPFAM" id="SSF52540">
    <property type="entry name" value="P-loop containing nucleoside triphosphate hydrolases"/>
    <property type="match status" value="1"/>
</dbReference>
<dbReference type="PROSITE" id="PS00152">
    <property type="entry name" value="ATPASE_ALPHA_BETA"/>
    <property type="match status" value="1"/>
</dbReference>
<evidence type="ECO:0000255" key="1"/>
<evidence type="ECO:0000269" key="2">
    <source>
    </source>
</evidence>
<evidence type="ECO:0000305" key="3"/>